<accession>A1TT72</accession>
<feature type="chain" id="PRO_0000335691" description="4-diphosphocytidyl-2-C-methyl-D-erythritol kinase">
    <location>
        <begin position="1"/>
        <end position="285"/>
    </location>
</feature>
<feature type="active site" evidence="1">
    <location>
        <position position="12"/>
    </location>
</feature>
<feature type="active site" evidence="1">
    <location>
        <position position="136"/>
    </location>
</feature>
<feature type="binding site" evidence="1">
    <location>
        <begin position="94"/>
        <end position="104"/>
    </location>
    <ligand>
        <name>ATP</name>
        <dbReference type="ChEBI" id="CHEBI:30616"/>
    </ligand>
</feature>
<proteinExistence type="inferred from homology"/>
<dbReference type="EC" id="2.7.1.148" evidence="1"/>
<dbReference type="EMBL" id="CP000512">
    <property type="protein sequence ID" value="ABM34160.1"/>
    <property type="molecule type" value="Genomic_DNA"/>
</dbReference>
<dbReference type="RefSeq" id="WP_011796657.1">
    <property type="nucleotide sequence ID" value="NC_008752.1"/>
</dbReference>
<dbReference type="SMR" id="A1TT72"/>
<dbReference type="STRING" id="397945.Aave_3609"/>
<dbReference type="GeneID" id="79791501"/>
<dbReference type="KEGG" id="aav:Aave_3609"/>
<dbReference type="eggNOG" id="COG1947">
    <property type="taxonomic scope" value="Bacteria"/>
</dbReference>
<dbReference type="HOGENOM" id="CLU_053057_3_0_4"/>
<dbReference type="OrthoDB" id="9809438at2"/>
<dbReference type="UniPathway" id="UPA00056">
    <property type="reaction ID" value="UER00094"/>
</dbReference>
<dbReference type="Proteomes" id="UP000002596">
    <property type="component" value="Chromosome"/>
</dbReference>
<dbReference type="GO" id="GO:0050515">
    <property type="term" value="F:4-(cytidine 5'-diphospho)-2-C-methyl-D-erythritol kinase activity"/>
    <property type="evidence" value="ECO:0007669"/>
    <property type="project" value="UniProtKB-UniRule"/>
</dbReference>
<dbReference type="GO" id="GO:0005524">
    <property type="term" value="F:ATP binding"/>
    <property type="evidence" value="ECO:0007669"/>
    <property type="project" value="UniProtKB-UniRule"/>
</dbReference>
<dbReference type="GO" id="GO:0019288">
    <property type="term" value="P:isopentenyl diphosphate biosynthetic process, methylerythritol 4-phosphate pathway"/>
    <property type="evidence" value="ECO:0007669"/>
    <property type="project" value="UniProtKB-UniRule"/>
</dbReference>
<dbReference type="GO" id="GO:0016114">
    <property type="term" value="P:terpenoid biosynthetic process"/>
    <property type="evidence" value="ECO:0007669"/>
    <property type="project" value="InterPro"/>
</dbReference>
<dbReference type="Gene3D" id="3.30.230.10">
    <property type="match status" value="1"/>
</dbReference>
<dbReference type="Gene3D" id="3.30.70.890">
    <property type="entry name" value="GHMP kinase, C-terminal domain"/>
    <property type="match status" value="1"/>
</dbReference>
<dbReference type="HAMAP" id="MF_00061">
    <property type="entry name" value="IspE"/>
    <property type="match status" value="1"/>
</dbReference>
<dbReference type="InterPro" id="IPR013750">
    <property type="entry name" value="GHMP_kinase_C_dom"/>
</dbReference>
<dbReference type="InterPro" id="IPR036554">
    <property type="entry name" value="GHMP_kinase_C_sf"/>
</dbReference>
<dbReference type="InterPro" id="IPR006204">
    <property type="entry name" value="GHMP_kinase_N_dom"/>
</dbReference>
<dbReference type="InterPro" id="IPR004424">
    <property type="entry name" value="IspE"/>
</dbReference>
<dbReference type="InterPro" id="IPR020568">
    <property type="entry name" value="Ribosomal_Su5_D2-typ_SF"/>
</dbReference>
<dbReference type="InterPro" id="IPR014721">
    <property type="entry name" value="Ribsml_uS5_D2-typ_fold_subgr"/>
</dbReference>
<dbReference type="NCBIfam" id="TIGR00154">
    <property type="entry name" value="ispE"/>
    <property type="match status" value="1"/>
</dbReference>
<dbReference type="PANTHER" id="PTHR43527">
    <property type="entry name" value="4-DIPHOSPHOCYTIDYL-2-C-METHYL-D-ERYTHRITOL KINASE, CHLOROPLASTIC"/>
    <property type="match status" value="1"/>
</dbReference>
<dbReference type="PANTHER" id="PTHR43527:SF2">
    <property type="entry name" value="4-DIPHOSPHOCYTIDYL-2-C-METHYL-D-ERYTHRITOL KINASE, CHLOROPLASTIC"/>
    <property type="match status" value="1"/>
</dbReference>
<dbReference type="Pfam" id="PF08544">
    <property type="entry name" value="GHMP_kinases_C"/>
    <property type="match status" value="1"/>
</dbReference>
<dbReference type="Pfam" id="PF00288">
    <property type="entry name" value="GHMP_kinases_N"/>
    <property type="match status" value="1"/>
</dbReference>
<dbReference type="PIRSF" id="PIRSF010376">
    <property type="entry name" value="IspE"/>
    <property type="match status" value="1"/>
</dbReference>
<dbReference type="SUPFAM" id="SSF55060">
    <property type="entry name" value="GHMP Kinase, C-terminal domain"/>
    <property type="match status" value="1"/>
</dbReference>
<dbReference type="SUPFAM" id="SSF54211">
    <property type="entry name" value="Ribosomal protein S5 domain 2-like"/>
    <property type="match status" value="1"/>
</dbReference>
<gene>
    <name evidence="1" type="primary">ispE</name>
    <name type="ordered locus">Aave_3609</name>
</gene>
<protein>
    <recommendedName>
        <fullName evidence="1">4-diphosphocytidyl-2-C-methyl-D-erythritol kinase</fullName>
        <shortName evidence="1">CMK</shortName>
        <ecNumber evidence="1">2.7.1.148</ecNumber>
    </recommendedName>
    <alternativeName>
        <fullName evidence="1">4-(cytidine-5'-diphospho)-2-C-methyl-D-erythritol kinase</fullName>
    </alternativeName>
</protein>
<organism>
    <name type="scientific">Paracidovorax citrulli (strain AAC00-1)</name>
    <name type="common">Acidovorax citrulli</name>
    <dbReference type="NCBI Taxonomy" id="397945"/>
    <lineage>
        <taxon>Bacteria</taxon>
        <taxon>Pseudomonadati</taxon>
        <taxon>Pseudomonadota</taxon>
        <taxon>Betaproteobacteria</taxon>
        <taxon>Burkholderiales</taxon>
        <taxon>Comamonadaceae</taxon>
        <taxon>Paracidovorax</taxon>
    </lineage>
</organism>
<comment type="function">
    <text evidence="1">Catalyzes the phosphorylation of the position 2 hydroxy group of 4-diphosphocytidyl-2C-methyl-D-erythritol.</text>
</comment>
<comment type="catalytic activity">
    <reaction evidence="1">
        <text>4-CDP-2-C-methyl-D-erythritol + ATP = 4-CDP-2-C-methyl-D-erythritol 2-phosphate + ADP + H(+)</text>
        <dbReference type="Rhea" id="RHEA:18437"/>
        <dbReference type="ChEBI" id="CHEBI:15378"/>
        <dbReference type="ChEBI" id="CHEBI:30616"/>
        <dbReference type="ChEBI" id="CHEBI:57823"/>
        <dbReference type="ChEBI" id="CHEBI:57919"/>
        <dbReference type="ChEBI" id="CHEBI:456216"/>
        <dbReference type="EC" id="2.7.1.148"/>
    </reaction>
</comment>
<comment type="pathway">
    <text evidence="1">Isoprenoid biosynthesis; isopentenyl diphosphate biosynthesis via DXP pathway; isopentenyl diphosphate from 1-deoxy-D-xylulose 5-phosphate: step 3/6.</text>
</comment>
<comment type="similarity">
    <text evidence="1">Belongs to the GHMP kinase family. IspE subfamily.</text>
</comment>
<sequence length="285" mass="30829">MRTLHDLPAPAKLNLFLHITGRRPDGYHLLQSVFMLIDWCDTLHIELRPDGGISREDMGAGLPADDLCTRAARALQAATGTRQGAHIVLEKSIPAQAGMGGGSSDAATTLLALNRLWGLGLGRTALERIGLSLGADIPFFLRGRNAWVEGIGETIMPLENVHALPQSRFVVVKPEAGLDTKSIFSSPSLERNSERATISGFAAAHYQFGKNVLQPVAETLCPEVSEAIRWLEHKGLQARMTGSGSAVFAQMTHAIDLFDLPTGWRAKVCDNLRLHPLAGWAADED</sequence>
<name>ISPE_PARC0</name>
<keyword id="KW-0067">ATP-binding</keyword>
<keyword id="KW-0414">Isoprene biosynthesis</keyword>
<keyword id="KW-0418">Kinase</keyword>
<keyword id="KW-0547">Nucleotide-binding</keyword>
<keyword id="KW-0808">Transferase</keyword>
<evidence type="ECO:0000255" key="1">
    <source>
        <dbReference type="HAMAP-Rule" id="MF_00061"/>
    </source>
</evidence>
<reference key="1">
    <citation type="submission" date="2006-12" db="EMBL/GenBank/DDBJ databases">
        <title>Complete sequence of Acidovorax avenae subsp. citrulli AAC00-1.</title>
        <authorList>
            <person name="Copeland A."/>
            <person name="Lucas S."/>
            <person name="Lapidus A."/>
            <person name="Barry K."/>
            <person name="Detter J.C."/>
            <person name="Glavina del Rio T."/>
            <person name="Dalin E."/>
            <person name="Tice H."/>
            <person name="Pitluck S."/>
            <person name="Kiss H."/>
            <person name="Brettin T."/>
            <person name="Bruce D."/>
            <person name="Han C."/>
            <person name="Tapia R."/>
            <person name="Gilna P."/>
            <person name="Schmutz J."/>
            <person name="Larimer F."/>
            <person name="Land M."/>
            <person name="Hauser L."/>
            <person name="Kyrpides N."/>
            <person name="Kim E."/>
            <person name="Stahl D."/>
            <person name="Richardson P."/>
        </authorList>
    </citation>
    <scope>NUCLEOTIDE SEQUENCE [LARGE SCALE GENOMIC DNA]</scope>
    <source>
        <strain>AAC00-1</strain>
    </source>
</reference>